<reference key="1">
    <citation type="submission" date="2004-11" db="EMBL/GenBank/DDBJ databases">
        <authorList>
            <consortium name="The German cDNA consortium"/>
        </authorList>
    </citation>
    <scope>NUCLEOTIDE SEQUENCE [LARGE SCALE MRNA]</scope>
    <source>
        <tissue>Liver</tissue>
    </source>
</reference>
<accession>Q5RBQ2</accession>
<organism>
    <name type="scientific">Pongo abelii</name>
    <name type="common">Sumatran orangutan</name>
    <name type="synonym">Pongo pygmaeus abelii</name>
    <dbReference type="NCBI Taxonomy" id="9601"/>
    <lineage>
        <taxon>Eukaryota</taxon>
        <taxon>Metazoa</taxon>
        <taxon>Chordata</taxon>
        <taxon>Craniata</taxon>
        <taxon>Vertebrata</taxon>
        <taxon>Euteleostomi</taxon>
        <taxon>Mammalia</taxon>
        <taxon>Eutheria</taxon>
        <taxon>Euarchontoglires</taxon>
        <taxon>Primates</taxon>
        <taxon>Haplorrhini</taxon>
        <taxon>Catarrhini</taxon>
        <taxon>Hominidae</taxon>
        <taxon>Pongo</taxon>
    </lineage>
</organism>
<protein>
    <recommendedName>
        <fullName>Glycoprotein integral membrane protein 1</fullName>
    </recommendedName>
</protein>
<evidence type="ECO:0000255" key="1"/>
<evidence type="ECO:0000305" key="2"/>
<name>GINM1_PONAB</name>
<feature type="signal peptide" evidence="1">
    <location>
        <begin position="1"/>
        <end position="23"/>
    </location>
</feature>
<feature type="chain" id="PRO_0000019545" description="Glycoprotein integral membrane protein 1">
    <location>
        <begin position="24"/>
        <end position="330"/>
    </location>
</feature>
<feature type="topological domain" description="Extracellular" evidence="1">
    <location>
        <begin position="24"/>
        <end position="268"/>
    </location>
</feature>
<feature type="transmembrane region" description="Helical" evidence="1">
    <location>
        <begin position="269"/>
        <end position="289"/>
    </location>
</feature>
<feature type="topological domain" description="Cytoplasmic" evidence="1">
    <location>
        <begin position="290"/>
        <end position="330"/>
    </location>
</feature>
<feature type="glycosylation site" description="N-linked (GlcNAc...) asparagine" evidence="1">
    <location>
        <position position="46"/>
    </location>
</feature>
<feature type="glycosylation site" description="N-linked (GlcNAc...) asparagine" evidence="1">
    <location>
        <position position="64"/>
    </location>
</feature>
<feature type="glycosylation site" description="N-linked (GlcNAc...) asparagine" evidence="1">
    <location>
        <position position="166"/>
    </location>
</feature>
<feature type="glycosylation site" description="N-linked (GlcNAc...) asparagine" evidence="1">
    <location>
        <position position="191"/>
    </location>
</feature>
<gene>
    <name type="primary">GINM1</name>
</gene>
<comment type="subcellular location">
    <subcellularLocation>
        <location evidence="2">Membrane</location>
        <topology evidence="2">Single-pass type I membrane protein</topology>
    </subcellularLocation>
</comment>
<sequence length="330" mass="36754">MEGAPLGPLALRLLLFVALPASGWLTTGAPEPPPLSGAPQDGIRINVTTLKDDGDISKQQVVLNITYESGQVYVNDLPVNSGVTRISCQTLIVKNENLENLEEKEYFGIVSVRILVHEWPMTSGSSLQLIVIQEEVVEIDGKQVQQKDVTEIDILVKNWGVLRHSNYTLPLEESMLHSISRDSDILFTLPNLSKKESVSSLQTTSQYLIRNVETTVDEDVLPGKLPETPLRAEPPSSYKVMCQWMEKFRKDLCRFWSSVFPVFFQFLNIMVVGITGAAVVITILKVLFPVSEYKGILQLDKVDVIPVTAINLYPDGPEKTAENLEDKTCI</sequence>
<proteinExistence type="evidence at transcript level"/>
<keyword id="KW-0325">Glycoprotein</keyword>
<keyword id="KW-0472">Membrane</keyword>
<keyword id="KW-1185">Reference proteome</keyword>
<keyword id="KW-0732">Signal</keyword>
<keyword id="KW-0812">Transmembrane</keyword>
<keyword id="KW-1133">Transmembrane helix</keyword>
<dbReference type="EMBL" id="CR858586">
    <property type="protein sequence ID" value="CAH90808.1"/>
    <property type="molecule type" value="mRNA"/>
</dbReference>
<dbReference type="RefSeq" id="NP_001125459.1">
    <property type="nucleotide sequence ID" value="NM_001131987.1"/>
</dbReference>
<dbReference type="SMR" id="Q5RBQ2"/>
<dbReference type="FunCoup" id="Q5RBQ2">
    <property type="interactions" value="386"/>
</dbReference>
<dbReference type="GlyCosmos" id="Q5RBQ2">
    <property type="glycosylation" value="4 sites, No reported glycans"/>
</dbReference>
<dbReference type="Ensembl" id="ENSPPYT00000019888.2">
    <property type="protein sequence ID" value="ENSPPYP00000019133.2"/>
    <property type="gene ID" value="ENSPPYG00000017088.2"/>
</dbReference>
<dbReference type="GeneID" id="100172367"/>
<dbReference type="KEGG" id="pon:100172367"/>
<dbReference type="CTD" id="116254"/>
<dbReference type="eggNOG" id="ENOG502RWUZ">
    <property type="taxonomic scope" value="Eukaryota"/>
</dbReference>
<dbReference type="GeneTree" id="ENSGT00390000008373"/>
<dbReference type="InParanoid" id="Q5RBQ2"/>
<dbReference type="OMA" id="FNLMEVI"/>
<dbReference type="OrthoDB" id="10022429at2759"/>
<dbReference type="Proteomes" id="UP000001595">
    <property type="component" value="Chromosome 6"/>
</dbReference>
<dbReference type="GO" id="GO:0016020">
    <property type="term" value="C:membrane"/>
    <property type="evidence" value="ECO:0007669"/>
    <property type="project" value="UniProtKB-SubCell"/>
</dbReference>
<dbReference type="InterPro" id="IPR042319">
    <property type="entry name" value="GINM1"/>
</dbReference>
<dbReference type="PANTHER" id="PTHR28549">
    <property type="entry name" value="GLYCOPROTEIN INTEGRAL MEMBRANE PROTEIN 1"/>
    <property type="match status" value="1"/>
</dbReference>
<dbReference type="PANTHER" id="PTHR28549:SF1">
    <property type="entry name" value="GLYCOPROTEIN INTEGRAL MEMBRANE PROTEIN 1"/>
    <property type="match status" value="1"/>
</dbReference>